<comment type="function">
    <text evidence="1">Cleaves peptides in various proteins in a process that requires ATP hydrolysis. Has a chymotrypsin-like activity. Plays a major role in the degradation of misfolded proteins.</text>
</comment>
<comment type="catalytic activity">
    <reaction evidence="1">
        <text>Hydrolysis of proteins to small peptides in the presence of ATP and magnesium. alpha-casein is the usual test substrate. In the absence of ATP, only oligopeptides shorter than five residues are hydrolyzed (such as succinyl-Leu-Tyr-|-NHMec, and Leu-Tyr-Leu-|-Tyr-Trp, in which cleavage of the -Tyr-|-Leu- and -Tyr-|-Trp bonds also occurs).</text>
        <dbReference type="EC" id="3.4.21.92"/>
    </reaction>
</comment>
<comment type="subunit">
    <text evidence="1">Fourteen ClpP subunits assemble into 2 heptameric rings which stack back to back to give a disk-like structure with a central cavity, resembling the structure of eukaryotic proteasomes.</text>
</comment>
<comment type="subcellular location">
    <subcellularLocation>
        <location evidence="1">Cytoplasm</location>
    </subcellularLocation>
</comment>
<comment type="similarity">
    <text evidence="1">Belongs to the peptidase S14 family.</text>
</comment>
<comment type="sequence caution" evidence="2">
    <conflict type="erroneous initiation">
        <sequence resource="EMBL-CDS" id="ABD12133"/>
    </conflict>
</comment>
<proteinExistence type="inferred from homology"/>
<feature type="chain" id="PRO_0000236389" description="ATP-dependent Clp protease proteolytic subunit 3">
    <location>
        <begin position="1"/>
        <end position="213"/>
    </location>
</feature>
<feature type="active site" description="Nucleophile" evidence="1">
    <location>
        <position position="107"/>
    </location>
</feature>
<feature type="active site" evidence="1">
    <location>
        <position position="132"/>
    </location>
</feature>
<name>CLPP3_FRACC</name>
<organism>
    <name type="scientific">Frankia casuarinae (strain DSM 45818 / CECT 9043 / HFP020203 / CcI3)</name>
    <dbReference type="NCBI Taxonomy" id="106370"/>
    <lineage>
        <taxon>Bacteria</taxon>
        <taxon>Bacillati</taxon>
        <taxon>Actinomycetota</taxon>
        <taxon>Actinomycetes</taxon>
        <taxon>Frankiales</taxon>
        <taxon>Frankiaceae</taxon>
        <taxon>Frankia</taxon>
    </lineage>
</organism>
<keyword id="KW-0963">Cytoplasm</keyword>
<keyword id="KW-0378">Hydrolase</keyword>
<keyword id="KW-0645">Protease</keyword>
<keyword id="KW-1185">Reference proteome</keyword>
<keyword id="KW-0720">Serine protease</keyword>
<gene>
    <name evidence="1" type="primary">clpP3</name>
    <name type="ordered locus">Francci3_2773</name>
</gene>
<protein>
    <recommendedName>
        <fullName evidence="1">ATP-dependent Clp protease proteolytic subunit 3</fullName>
        <ecNumber evidence="1">3.4.21.92</ecNumber>
    </recommendedName>
    <alternativeName>
        <fullName evidence="1">Endopeptidase Clp 3</fullName>
    </alternativeName>
</protein>
<evidence type="ECO:0000255" key="1">
    <source>
        <dbReference type="HAMAP-Rule" id="MF_00444"/>
    </source>
</evidence>
<evidence type="ECO:0000305" key="2"/>
<accession>Q2J9A9</accession>
<reference key="1">
    <citation type="journal article" date="2007" name="Genome Res.">
        <title>Genome characteristics of facultatively symbiotic Frankia sp. strains reflect host range and host plant biogeography.</title>
        <authorList>
            <person name="Normand P."/>
            <person name="Lapierre P."/>
            <person name="Tisa L.S."/>
            <person name="Gogarten J.P."/>
            <person name="Alloisio N."/>
            <person name="Bagnarol E."/>
            <person name="Bassi C.A."/>
            <person name="Berry A.M."/>
            <person name="Bickhart D.M."/>
            <person name="Choisne N."/>
            <person name="Couloux A."/>
            <person name="Cournoyer B."/>
            <person name="Cruveiller S."/>
            <person name="Daubin V."/>
            <person name="Demange N."/>
            <person name="Francino M.P."/>
            <person name="Goltsman E."/>
            <person name="Huang Y."/>
            <person name="Kopp O.R."/>
            <person name="Labarre L."/>
            <person name="Lapidus A."/>
            <person name="Lavire C."/>
            <person name="Marechal J."/>
            <person name="Martinez M."/>
            <person name="Mastronunzio J.E."/>
            <person name="Mullin B.C."/>
            <person name="Niemann J."/>
            <person name="Pujic P."/>
            <person name="Rawnsley T."/>
            <person name="Rouy Z."/>
            <person name="Schenowitz C."/>
            <person name="Sellstedt A."/>
            <person name="Tavares F."/>
            <person name="Tomkins J.P."/>
            <person name="Vallenet D."/>
            <person name="Valverde C."/>
            <person name="Wall L.G."/>
            <person name="Wang Y."/>
            <person name="Medigue C."/>
            <person name="Benson D.R."/>
        </authorList>
    </citation>
    <scope>NUCLEOTIDE SEQUENCE [LARGE SCALE GENOMIC DNA]</scope>
    <source>
        <strain>DSM 45818 / CECT 9043 / HFP020203 / CcI3</strain>
    </source>
</reference>
<dbReference type="EC" id="3.4.21.92" evidence="1"/>
<dbReference type="EMBL" id="CP000249">
    <property type="protein sequence ID" value="ABD12133.1"/>
    <property type="status" value="ALT_INIT"/>
    <property type="molecule type" value="Genomic_DNA"/>
</dbReference>
<dbReference type="SMR" id="Q2J9A9"/>
<dbReference type="STRING" id="106370.Francci3_2773"/>
<dbReference type="MEROPS" id="S14.009"/>
<dbReference type="KEGG" id="fra:Francci3_2773"/>
<dbReference type="eggNOG" id="COG0740">
    <property type="taxonomic scope" value="Bacteria"/>
</dbReference>
<dbReference type="HOGENOM" id="CLU_058707_3_2_11"/>
<dbReference type="OrthoDB" id="9802800at2"/>
<dbReference type="PhylomeDB" id="Q2J9A9"/>
<dbReference type="Proteomes" id="UP000001937">
    <property type="component" value="Chromosome"/>
</dbReference>
<dbReference type="GO" id="GO:0005737">
    <property type="term" value="C:cytoplasm"/>
    <property type="evidence" value="ECO:0007669"/>
    <property type="project" value="UniProtKB-SubCell"/>
</dbReference>
<dbReference type="GO" id="GO:0009368">
    <property type="term" value="C:endopeptidase Clp complex"/>
    <property type="evidence" value="ECO:0007669"/>
    <property type="project" value="TreeGrafter"/>
</dbReference>
<dbReference type="GO" id="GO:0004176">
    <property type="term" value="F:ATP-dependent peptidase activity"/>
    <property type="evidence" value="ECO:0007669"/>
    <property type="project" value="InterPro"/>
</dbReference>
<dbReference type="GO" id="GO:0051117">
    <property type="term" value="F:ATPase binding"/>
    <property type="evidence" value="ECO:0007669"/>
    <property type="project" value="TreeGrafter"/>
</dbReference>
<dbReference type="GO" id="GO:0004252">
    <property type="term" value="F:serine-type endopeptidase activity"/>
    <property type="evidence" value="ECO:0007669"/>
    <property type="project" value="UniProtKB-UniRule"/>
</dbReference>
<dbReference type="GO" id="GO:0006515">
    <property type="term" value="P:protein quality control for misfolded or incompletely synthesized proteins"/>
    <property type="evidence" value="ECO:0007669"/>
    <property type="project" value="TreeGrafter"/>
</dbReference>
<dbReference type="CDD" id="cd07017">
    <property type="entry name" value="S14_ClpP_2"/>
    <property type="match status" value="1"/>
</dbReference>
<dbReference type="FunFam" id="3.90.226.10:FF:000002">
    <property type="entry name" value="ATP-dependent Clp protease proteolytic subunit"/>
    <property type="match status" value="1"/>
</dbReference>
<dbReference type="Gene3D" id="3.90.226.10">
    <property type="entry name" value="2-enoyl-CoA Hydratase, Chain A, domain 1"/>
    <property type="match status" value="1"/>
</dbReference>
<dbReference type="HAMAP" id="MF_00444">
    <property type="entry name" value="ClpP"/>
    <property type="match status" value="1"/>
</dbReference>
<dbReference type="InterPro" id="IPR001907">
    <property type="entry name" value="ClpP"/>
</dbReference>
<dbReference type="InterPro" id="IPR029045">
    <property type="entry name" value="ClpP/crotonase-like_dom_sf"/>
</dbReference>
<dbReference type="InterPro" id="IPR023562">
    <property type="entry name" value="ClpP/TepA"/>
</dbReference>
<dbReference type="InterPro" id="IPR033135">
    <property type="entry name" value="ClpP_His_AS"/>
</dbReference>
<dbReference type="InterPro" id="IPR018215">
    <property type="entry name" value="ClpP_Ser_AS"/>
</dbReference>
<dbReference type="NCBIfam" id="NF001368">
    <property type="entry name" value="PRK00277.1"/>
    <property type="match status" value="1"/>
</dbReference>
<dbReference type="NCBIfam" id="NF009205">
    <property type="entry name" value="PRK12553.1"/>
    <property type="match status" value="1"/>
</dbReference>
<dbReference type="PANTHER" id="PTHR10381">
    <property type="entry name" value="ATP-DEPENDENT CLP PROTEASE PROTEOLYTIC SUBUNIT"/>
    <property type="match status" value="1"/>
</dbReference>
<dbReference type="PANTHER" id="PTHR10381:SF26">
    <property type="entry name" value="ATP-DEPENDENT CLP PROTEASE PROTEOLYTIC SUBUNIT-LIKE-RELATED"/>
    <property type="match status" value="1"/>
</dbReference>
<dbReference type="Pfam" id="PF00574">
    <property type="entry name" value="CLP_protease"/>
    <property type="match status" value="1"/>
</dbReference>
<dbReference type="PRINTS" id="PR00127">
    <property type="entry name" value="CLPPROTEASEP"/>
</dbReference>
<dbReference type="SUPFAM" id="SSF52096">
    <property type="entry name" value="ClpP/crotonase"/>
    <property type="match status" value="1"/>
</dbReference>
<dbReference type="PROSITE" id="PS00382">
    <property type="entry name" value="CLP_PROTEASE_HIS"/>
    <property type="match status" value="1"/>
</dbReference>
<dbReference type="PROSITE" id="PS00381">
    <property type="entry name" value="CLP_PROTEASE_SER"/>
    <property type="match status" value="1"/>
</dbReference>
<sequence length="213" mass="23486">MLGGGAPRARHVLPNIVERTSRGEYSMDPYSKLLKERIVFLGVQIDDVSANDVMAQLLFLESEDPDRDISIYINSPGGSFTSLTAIYDTMQFVRPDISTICMGQAASAAAVLLAAGTPGKRFALENSRILIHQPSAQGEGQSSDIEIQAREILRVRALQETMLARHTGRTETEIRRDTERDKIFSADEAEEYGLIDEVIMSRKAARLLSARSA</sequence>